<sequence length="386" mass="40607">MTSPAPVSVSIDPVELAQALIRRPSVTPADAGAMDTLQRQLEALGFACRRMKFGEIENLYARRGTARPNLCFAGHTDVVPVGDDAAWTAGPFEAEIKEGVLYGRGAVDMKSAIAAFVAAVANVPDHPGSISFLITGDEEGVAEDGTVKVVEALAAEGEIIDHCIVGEPTSANLLGDMVKIGRRGSINAWITVEGRQGHVAYPHRAANPVPVLVDILSALKARVLDDGYTGFQPSNLEITTIDVGNTATNVIPAAAKARVNIRFNPAHKGKDLAAWIEGECAKAAEGFDGAATALCKISGEAFLTEPGDFTDVIVAAVTDATGRAPELSTTGGTSDARFIRALCPVVEFGLVGSTMHQVDERVPVEEVRQLAGAYEALIRRYFAAFA</sequence>
<dbReference type="EC" id="3.5.1.18" evidence="1"/>
<dbReference type="EMBL" id="CP001340">
    <property type="protein sequence ID" value="ACL93744.1"/>
    <property type="molecule type" value="Genomic_DNA"/>
</dbReference>
<dbReference type="RefSeq" id="WP_010918164.1">
    <property type="nucleotide sequence ID" value="NC_011916.1"/>
</dbReference>
<dbReference type="RefSeq" id="YP_002515652.1">
    <property type="nucleotide sequence ID" value="NC_011916.1"/>
</dbReference>
<dbReference type="SMR" id="B8GYE7"/>
<dbReference type="MEROPS" id="M20.010"/>
<dbReference type="GeneID" id="7330730"/>
<dbReference type="KEGG" id="ccs:CCNA_00277"/>
<dbReference type="PATRIC" id="fig|565050.3.peg.274"/>
<dbReference type="HOGENOM" id="CLU_021802_4_0_5"/>
<dbReference type="OrthoDB" id="9809784at2"/>
<dbReference type="PhylomeDB" id="B8GYE7"/>
<dbReference type="UniPathway" id="UPA00034">
    <property type="reaction ID" value="UER00021"/>
</dbReference>
<dbReference type="Proteomes" id="UP000001364">
    <property type="component" value="Chromosome"/>
</dbReference>
<dbReference type="GO" id="GO:0008777">
    <property type="term" value="F:acetylornithine deacetylase activity"/>
    <property type="evidence" value="ECO:0007669"/>
    <property type="project" value="TreeGrafter"/>
</dbReference>
<dbReference type="GO" id="GO:0050897">
    <property type="term" value="F:cobalt ion binding"/>
    <property type="evidence" value="ECO:0007669"/>
    <property type="project" value="UniProtKB-UniRule"/>
</dbReference>
<dbReference type="GO" id="GO:0009014">
    <property type="term" value="F:succinyl-diaminopimelate desuccinylase activity"/>
    <property type="evidence" value="ECO:0007669"/>
    <property type="project" value="UniProtKB-UniRule"/>
</dbReference>
<dbReference type="GO" id="GO:0008270">
    <property type="term" value="F:zinc ion binding"/>
    <property type="evidence" value="ECO:0007669"/>
    <property type="project" value="UniProtKB-UniRule"/>
</dbReference>
<dbReference type="GO" id="GO:0019877">
    <property type="term" value="P:diaminopimelate biosynthetic process"/>
    <property type="evidence" value="ECO:0007669"/>
    <property type="project" value="UniProtKB-UniRule"/>
</dbReference>
<dbReference type="GO" id="GO:0006526">
    <property type="term" value="P:L-arginine biosynthetic process"/>
    <property type="evidence" value="ECO:0007669"/>
    <property type="project" value="TreeGrafter"/>
</dbReference>
<dbReference type="GO" id="GO:0009089">
    <property type="term" value="P:lysine biosynthetic process via diaminopimelate"/>
    <property type="evidence" value="ECO:0007669"/>
    <property type="project" value="UniProtKB-UniRule"/>
</dbReference>
<dbReference type="CDD" id="cd03891">
    <property type="entry name" value="M20_DapE_proteobac"/>
    <property type="match status" value="1"/>
</dbReference>
<dbReference type="Gene3D" id="3.40.630.10">
    <property type="entry name" value="Zn peptidases"/>
    <property type="match status" value="2"/>
</dbReference>
<dbReference type="HAMAP" id="MF_01690">
    <property type="entry name" value="DapE"/>
    <property type="match status" value="1"/>
</dbReference>
<dbReference type="InterPro" id="IPR036264">
    <property type="entry name" value="Bact_exopeptidase_dim_dom"/>
</dbReference>
<dbReference type="InterPro" id="IPR005941">
    <property type="entry name" value="DapE_proteobac"/>
</dbReference>
<dbReference type="InterPro" id="IPR002933">
    <property type="entry name" value="Peptidase_M20"/>
</dbReference>
<dbReference type="InterPro" id="IPR011650">
    <property type="entry name" value="Peptidase_M20_dimer"/>
</dbReference>
<dbReference type="InterPro" id="IPR050072">
    <property type="entry name" value="Peptidase_M20A"/>
</dbReference>
<dbReference type="NCBIfam" id="TIGR01246">
    <property type="entry name" value="dapE_proteo"/>
    <property type="match status" value="1"/>
</dbReference>
<dbReference type="NCBIfam" id="NF009557">
    <property type="entry name" value="PRK13009.1"/>
    <property type="match status" value="1"/>
</dbReference>
<dbReference type="PANTHER" id="PTHR43808">
    <property type="entry name" value="ACETYLORNITHINE DEACETYLASE"/>
    <property type="match status" value="1"/>
</dbReference>
<dbReference type="PANTHER" id="PTHR43808:SF31">
    <property type="entry name" value="N-ACETYL-L-CITRULLINE DEACETYLASE"/>
    <property type="match status" value="1"/>
</dbReference>
<dbReference type="Pfam" id="PF07687">
    <property type="entry name" value="M20_dimer"/>
    <property type="match status" value="1"/>
</dbReference>
<dbReference type="Pfam" id="PF01546">
    <property type="entry name" value="Peptidase_M20"/>
    <property type="match status" value="1"/>
</dbReference>
<dbReference type="SUPFAM" id="SSF55031">
    <property type="entry name" value="Bacterial exopeptidase dimerisation domain"/>
    <property type="match status" value="1"/>
</dbReference>
<dbReference type="SUPFAM" id="SSF53187">
    <property type="entry name" value="Zn-dependent exopeptidases"/>
    <property type="match status" value="1"/>
</dbReference>
<dbReference type="PROSITE" id="PS00759">
    <property type="entry name" value="ARGE_DAPE_CPG2_2"/>
    <property type="match status" value="1"/>
</dbReference>
<comment type="function">
    <text evidence="1">Catalyzes the hydrolysis of N-succinyl-L,L-diaminopimelic acid (SDAP), forming succinate and LL-2,6-diaminopimelate (DAP), an intermediate involved in the bacterial biosynthesis of lysine and meso-diaminopimelic acid, an essential component of bacterial cell walls.</text>
</comment>
<comment type="catalytic activity">
    <reaction evidence="1">
        <text>N-succinyl-(2S,6S)-2,6-diaminopimelate + H2O = (2S,6S)-2,6-diaminopimelate + succinate</text>
        <dbReference type="Rhea" id="RHEA:22608"/>
        <dbReference type="ChEBI" id="CHEBI:15377"/>
        <dbReference type="ChEBI" id="CHEBI:30031"/>
        <dbReference type="ChEBI" id="CHEBI:57609"/>
        <dbReference type="ChEBI" id="CHEBI:58087"/>
        <dbReference type="EC" id="3.5.1.18"/>
    </reaction>
</comment>
<comment type="cofactor">
    <cofactor evidence="1">
        <name>Zn(2+)</name>
        <dbReference type="ChEBI" id="CHEBI:29105"/>
    </cofactor>
    <cofactor evidence="1">
        <name>Co(2+)</name>
        <dbReference type="ChEBI" id="CHEBI:48828"/>
    </cofactor>
    <text evidence="1">Binds 2 Zn(2+) or Co(2+) ions per subunit.</text>
</comment>
<comment type="pathway">
    <text evidence="1">Amino-acid biosynthesis; L-lysine biosynthesis via DAP pathway; LL-2,6-diaminopimelate from (S)-tetrahydrodipicolinate (succinylase route): step 3/3.</text>
</comment>
<comment type="subunit">
    <text evidence="1">Homodimer.</text>
</comment>
<comment type="similarity">
    <text evidence="1">Belongs to the peptidase M20A family. DapE subfamily.</text>
</comment>
<proteinExistence type="inferred from homology"/>
<reference key="1">
    <citation type="journal article" date="2010" name="J. Bacteriol.">
        <title>The genetic basis of laboratory adaptation in Caulobacter crescentus.</title>
        <authorList>
            <person name="Marks M.E."/>
            <person name="Castro-Rojas C.M."/>
            <person name="Teiling C."/>
            <person name="Du L."/>
            <person name="Kapatral V."/>
            <person name="Walunas T.L."/>
            <person name="Crosson S."/>
        </authorList>
    </citation>
    <scope>NUCLEOTIDE SEQUENCE [LARGE SCALE GENOMIC DNA]</scope>
    <source>
        <strain>NA1000 / CB15N</strain>
    </source>
</reference>
<protein>
    <recommendedName>
        <fullName evidence="1">Succinyl-diaminopimelate desuccinylase</fullName>
        <shortName evidence="1">SDAP desuccinylase</shortName>
        <ecNumber evidence="1">3.5.1.18</ecNumber>
    </recommendedName>
    <alternativeName>
        <fullName evidence="1">N-succinyl-LL-2,6-diaminoheptanedioate amidohydrolase</fullName>
    </alternativeName>
</protein>
<gene>
    <name evidence="1" type="primary">dapE</name>
    <name type="ordered locus">CCNA_00277</name>
</gene>
<keyword id="KW-0028">Amino-acid biosynthesis</keyword>
<keyword id="KW-0170">Cobalt</keyword>
<keyword id="KW-0220">Diaminopimelate biosynthesis</keyword>
<keyword id="KW-0378">Hydrolase</keyword>
<keyword id="KW-0457">Lysine biosynthesis</keyword>
<keyword id="KW-0479">Metal-binding</keyword>
<keyword id="KW-1185">Reference proteome</keyword>
<keyword id="KW-0862">Zinc</keyword>
<name>DAPE_CAUVN</name>
<organism>
    <name type="scientific">Caulobacter vibrioides (strain NA1000 / CB15N)</name>
    <name type="common">Caulobacter crescentus</name>
    <dbReference type="NCBI Taxonomy" id="565050"/>
    <lineage>
        <taxon>Bacteria</taxon>
        <taxon>Pseudomonadati</taxon>
        <taxon>Pseudomonadota</taxon>
        <taxon>Alphaproteobacteria</taxon>
        <taxon>Caulobacterales</taxon>
        <taxon>Caulobacteraceae</taxon>
        <taxon>Caulobacter</taxon>
    </lineage>
</organism>
<feature type="chain" id="PRO_0000375527" description="Succinyl-diaminopimelate desuccinylase">
    <location>
        <begin position="1"/>
        <end position="386"/>
    </location>
</feature>
<feature type="active site" evidence="1">
    <location>
        <position position="77"/>
    </location>
</feature>
<feature type="active site" description="Proton acceptor" evidence="1">
    <location>
        <position position="138"/>
    </location>
</feature>
<feature type="binding site" evidence="1">
    <location>
        <position position="75"/>
    </location>
    <ligand>
        <name>Zn(2+)</name>
        <dbReference type="ChEBI" id="CHEBI:29105"/>
        <label>1</label>
    </ligand>
</feature>
<feature type="binding site" evidence="1">
    <location>
        <position position="108"/>
    </location>
    <ligand>
        <name>Zn(2+)</name>
        <dbReference type="ChEBI" id="CHEBI:29105"/>
        <label>1</label>
    </ligand>
</feature>
<feature type="binding site" evidence="1">
    <location>
        <position position="108"/>
    </location>
    <ligand>
        <name>Zn(2+)</name>
        <dbReference type="ChEBI" id="CHEBI:29105"/>
        <label>2</label>
    </ligand>
</feature>
<feature type="binding site" evidence="1">
    <location>
        <position position="139"/>
    </location>
    <ligand>
        <name>Zn(2+)</name>
        <dbReference type="ChEBI" id="CHEBI:29105"/>
        <label>2</label>
    </ligand>
</feature>
<feature type="binding site" evidence="1">
    <location>
        <position position="167"/>
    </location>
    <ligand>
        <name>Zn(2+)</name>
        <dbReference type="ChEBI" id="CHEBI:29105"/>
        <label>1</label>
    </ligand>
</feature>
<feature type="binding site" evidence="1">
    <location>
        <position position="356"/>
    </location>
    <ligand>
        <name>Zn(2+)</name>
        <dbReference type="ChEBI" id="CHEBI:29105"/>
        <label>2</label>
    </ligand>
</feature>
<evidence type="ECO:0000255" key="1">
    <source>
        <dbReference type="HAMAP-Rule" id="MF_01690"/>
    </source>
</evidence>
<accession>B8GYE7</accession>